<keyword id="KW-0963">Cytoplasm</keyword>
<keyword id="KW-0274">FAD</keyword>
<keyword id="KW-0285">Flavoprotein</keyword>
<keyword id="KW-0520">NAD</keyword>
<keyword id="KW-0521">NADP</keyword>
<keyword id="KW-0560">Oxidoreductase</keyword>
<comment type="function">
    <text evidence="1">Conversion of NADPH, generated by peripheral catabolic pathways, to NADH, which can enter the respiratory chain for energy generation.</text>
</comment>
<comment type="catalytic activity">
    <reaction evidence="1">
        <text>NAD(+) + NADPH = NADH + NADP(+)</text>
        <dbReference type="Rhea" id="RHEA:11692"/>
        <dbReference type="ChEBI" id="CHEBI:57540"/>
        <dbReference type="ChEBI" id="CHEBI:57783"/>
        <dbReference type="ChEBI" id="CHEBI:57945"/>
        <dbReference type="ChEBI" id="CHEBI:58349"/>
        <dbReference type="EC" id="1.6.1.1"/>
    </reaction>
</comment>
<comment type="cofactor">
    <cofactor evidence="1">
        <name>FAD</name>
        <dbReference type="ChEBI" id="CHEBI:57692"/>
    </cofactor>
    <text evidence="1">Binds 1 FAD per subunit.</text>
</comment>
<comment type="subcellular location">
    <subcellularLocation>
        <location evidence="1">Cytoplasm</location>
    </subcellularLocation>
</comment>
<comment type="similarity">
    <text evidence="1">Belongs to the class-I pyridine nucleotide-disulfide oxidoreductase family.</text>
</comment>
<proteinExistence type="inferred from homology"/>
<name>STHA_YERE8</name>
<sequence>MQQHFHFDAIVIGSGPGGEGAAMGLVKQGARVAVIERYNNVGGGCTHWGTIPSKALRHAVSRIIEFNQNPLYSDNARTISSSFSDILNHADRVINQQTRMRQGFYDRNHCQMFSGDASFIDANTINVRYADGTNDTLRADNIVIATGSRPYRPANVDFTHERIYDSDTILQLSHEPQHVIIYGAGVIGCEYASIFRGLSVKVDLINTRDRLLAFLDQEMSDALSYHFWNNGVVIRHNEEFEQIEGTVDGVIVHLKSGKKVKADCLLYANGRTGNTSGLGLEKIGLEADSRGLLKVNSMYQTALSHVYAVGDVIGYPSLASAAYDQGRIAAQAMIKGEANTHLIEDIPTGIYTIPEISSVGKTEQDLTAMKVPYEVGRAQFKHLARAQIVGMDTGSLKILFHRETKQILGIHCFGERAAEIIHIGQAIMEQKGEGNTIEYFVNTTFNYPTMAEAYRVAALNGLNRLF</sequence>
<organism>
    <name type="scientific">Yersinia enterocolitica serotype O:8 / biotype 1B (strain NCTC 13174 / 8081)</name>
    <dbReference type="NCBI Taxonomy" id="393305"/>
    <lineage>
        <taxon>Bacteria</taxon>
        <taxon>Pseudomonadati</taxon>
        <taxon>Pseudomonadota</taxon>
        <taxon>Gammaproteobacteria</taxon>
        <taxon>Enterobacterales</taxon>
        <taxon>Yersiniaceae</taxon>
        <taxon>Yersinia</taxon>
    </lineage>
</organism>
<evidence type="ECO:0000255" key="1">
    <source>
        <dbReference type="HAMAP-Rule" id="MF_00247"/>
    </source>
</evidence>
<protein>
    <recommendedName>
        <fullName evidence="1">Soluble pyridine nucleotide transhydrogenase</fullName>
        <shortName evidence="1">STH</shortName>
        <ecNumber evidence="1">1.6.1.1</ecNumber>
    </recommendedName>
    <alternativeName>
        <fullName evidence="1">NAD(P)(+) transhydrogenase [B-specific]</fullName>
    </alternativeName>
</protein>
<feature type="chain" id="PRO_1000012567" description="Soluble pyridine nucleotide transhydrogenase">
    <location>
        <begin position="1"/>
        <end position="466"/>
    </location>
</feature>
<feature type="binding site" evidence="1">
    <location>
        <begin position="36"/>
        <end position="45"/>
    </location>
    <ligand>
        <name>FAD</name>
        <dbReference type="ChEBI" id="CHEBI:57692"/>
    </ligand>
</feature>
<accession>A1JI37</accession>
<dbReference type="EC" id="1.6.1.1" evidence="1"/>
<dbReference type="EMBL" id="AM286415">
    <property type="protein sequence ID" value="CAL10275.1"/>
    <property type="molecule type" value="Genomic_DNA"/>
</dbReference>
<dbReference type="RefSeq" id="WP_005176056.1">
    <property type="nucleotide sequence ID" value="NC_008800.1"/>
</dbReference>
<dbReference type="RefSeq" id="YP_001004527.1">
    <property type="nucleotide sequence ID" value="NC_008800.1"/>
</dbReference>
<dbReference type="SMR" id="A1JI37"/>
<dbReference type="GeneID" id="31410775"/>
<dbReference type="KEGG" id="yen:YE0134"/>
<dbReference type="PATRIC" id="fig|393305.7.peg.225"/>
<dbReference type="eggNOG" id="COG1249">
    <property type="taxonomic scope" value="Bacteria"/>
</dbReference>
<dbReference type="HOGENOM" id="CLU_016755_0_0_6"/>
<dbReference type="OrthoDB" id="9800167at2"/>
<dbReference type="Proteomes" id="UP000000642">
    <property type="component" value="Chromosome"/>
</dbReference>
<dbReference type="GO" id="GO:0005829">
    <property type="term" value="C:cytosol"/>
    <property type="evidence" value="ECO:0007669"/>
    <property type="project" value="TreeGrafter"/>
</dbReference>
<dbReference type="GO" id="GO:0004148">
    <property type="term" value="F:dihydrolipoyl dehydrogenase (NADH) activity"/>
    <property type="evidence" value="ECO:0007669"/>
    <property type="project" value="TreeGrafter"/>
</dbReference>
<dbReference type="GO" id="GO:0050660">
    <property type="term" value="F:flavin adenine dinucleotide binding"/>
    <property type="evidence" value="ECO:0007669"/>
    <property type="project" value="TreeGrafter"/>
</dbReference>
<dbReference type="GO" id="GO:0003957">
    <property type="term" value="F:NAD(P)+ transhydrogenase (Si-specific) activity"/>
    <property type="evidence" value="ECO:0007669"/>
    <property type="project" value="UniProtKB-UniRule"/>
</dbReference>
<dbReference type="GO" id="GO:0006103">
    <property type="term" value="P:2-oxoglutarate metabolic process"/>
    <property type="evidence" value="ECO:0007669"/>
    <property type="project" value="TreeGrafter"/>
</dbReference>
<dbReference type="GO" id="GO:0006739">
    <property type="term" value="P:NADP metabolic process"/>
    <property type="evidence" value="ECO:0007669"/>
    <property type="project" value="UniProtKB-UniRule"/>
</dbReference>
<dbReference type="FunFam" id="3.30.390.30:FF:000002">
    <property type="entry name" value="Soluble pyridine nucleotide transhydrogenase"/>
    <property type="match status" value="1"/>
</dbReference>
<dbReference type="FunFam" id="3.50.50.60:FF:000008">
    <property type="entry name" value="Soluble pyridine nucleotide transhydrogenase"/>
    <property type="match status" value="1"/>
</dbReference>
<dbReference type="Gene3D" id="3.30.390.30">
    <property type="match status" value="1"/>
</dbReference>
<dbReference type="Gene3D" id="3.50.50.60">
    <property type="entry name" value="FAD/NAD(P)-binding domain"/>
    <property type="match status" value="2"/>
</dbReference>
<dbReference type="HAMAP" id="MF_00247">
    <property type="entry name" value="SthA"/>
    <property type="match status" value="1"/>
</dbReference>
<dbReference type="InterPro" id="IPR050151">
    <property type="entry name" value="Class-I_Pyr_Nuc-Dis_Oxidored"/>
</dbReference>
<dbReference type="InterPro" id="IPR036188">
    <property type="entry name" value="FAD/NAD-bd_sf"/>
</dbReference>
<dbReference type="InterPro" id="IPR023753">
    <property type="entry name" value="FAD/NAD-binding_dom"/>
</dbReference>
<dbReference type="InterPro" id="IPR016156">
    <property type="entry name" value="FAD/NAD-linked_Rdtase_dimer_sf"/>
</dbReference>
<dbReference type="InterPro" id="IPR001100">
    <property type="entry name" value="Pyr_nuc-diS_OxRdtase"/>
</dbReference>
<dbReference type="InterPro" id="IPR004099">
    <property type="entry name" value="Pyr_nucl-diS_OxRdtase_dimer"/>
</dbReference>
<dbReference type="InterPro" id="IPR022962">
    <property type="entry name" value="STH_gammaproteobact"/>
</dbReference>
<dbReference type="NCBIfam" id="NF003585">
    <property type="entry name" value="PRK05249.1"/>
    <property type="match status" value="1"/>
</dbReference>
<dbReference type="PANTHER" id="PTHR22912">
    <property type="entry name" value="DISULFIDE OXIDOREDUCTASE"/>
    <property type="match status" value="1"/>
</dbReference>
<dbReference type="PANTHER" id="PTHR22912:SF93">
    <property type="entry name" value="SOLUBLE PYRIDINE NUCLEOTIDE TRANSHYDROGENASE"/>
    <property type="match status" value="1"/>
</dbReference>
<dbReference type="Pfam" id="PF07992">
    <property type="entry name" value="Pyr_redox_2"/>
    <property type="match status" value="1"/>
</dbReference>
<dbReference type="Pfam" id="PF02852">
    <property type="entry name" value="Pyr_redox_dim"/>
    <property type="match status" value="1"/>
</dbReference>
<dbReference type="PIRSF" id="PIRSF000350">
    <property type="entry name" value="Mercury_reductase_MerA"/>
    <property type="match status" value="1"/>
</dbReference>
<dbReference type="PRINTS" id="PR00368">
    <property type="entry name" value="FADPNR"/>
</dbReference>
<dbReference type="PRINTS" id="PR00411">
    <property type="entry name" value="PNDRDTASEI"/>
</dbReference>
<dbReference type="SUPFAM" id="SSF51905">
    <property type="entry name" value="FAD/NAD(P)-binding domain"/>
    <property type="match status" value="1"/>
</dbReference>
<dbReference type="SUPFAM" id="SSF55424">
    <property type="entry name" value="FAD/NAD-linked reductases, dimerisation (C-terminal) domain"/>
    <property type="match status" value="1"/>
</dbReference>
<gene>
    <name evidence="1" type="primary">sthA</name>
    <name evidence="1" type="synonym">udhA</name>
    <name type="ordered locus">YE0134</name>
</gene>
<reference key="1">
    <citation type="journal article" date="2006" name="PLoS Genet.">
        <title>The complete genome sequence and comparative genome analysis of the high pathogenicity Yersinia enterocolitica strain 8081.</title>
        <authorList>
            <person name="Thomson N.R."/>
            <person name="Howard S."/>
            <person name="Wren B.W."/>
            <person name="Holden M.T.G."/>
            <person name="Crossman L."/>
            <person name="Challis G.L."/>
            <person name="Churcher C."/>
            <person name="Mungall K."/>
            <person name="Brooks K."/>
            <person name="Chillingworth T."/>
            <person name="Feltwell T."/>
            <person name="Abdellah Z."/>
            <person name="Hauser H."/>
            <person name="Jagels K."/>
            <person name="Maddison M."/>
            <person name="Moule S."/>
            <person name="Sanders M."/>
            <person name="Whitehead S."/>
            <person name="Quail M.A."/>
            <person name="Dougan G."/>
            <person name="Parkhill J."/>
            <person name="Prentice M.B."/>
        </authorList>
    </citation>
    <scope>NUCLEOTIDE SEQUENCE [LARGE SCALE GENOMIC DNA]</scope>
    <source>
        <strain>NCTC 13174 / 8081</strain>
    </source>
</reference>